<protein>
    <recommendedName>
        <fullName evidence="6">RAD51-associated protein 1</fullName>
        <shortName evidence="5">GgRAD51AP1</shortName>
    </recommendedName>
</protein>
<dbReference type="EMBL" id="AADN05000818">
    <property type="status" value="NOT_ANNOTATED_CDS"/>
    <property type="molecule type" value="Genomic_DNA"/>
</dbReference>
<dbReference type="RefSeq" id="XP_040516728.1">
    <property type="nucleotide sequence ID" value="XM_040660794.2"/>
</dbReference>
<dbReference type="RefSeq" id="XP_040516879.1">
    <property type="nucleotide sequence ID" value="XM_040660945.2"/>
</dbReference>
<dbReference type="FunCoup" id="A0A3Q2UEI8">
    <property type="interactions" value="473"/>
</dbReference>
<dbReference type="STRING" id="9031.ENSGALP00000027892"/>
<dbReference type="GeneID" id="419042"/>
<dbReference type="VEuPathDB" id="HostDB:geneid_419042"/>
<dbReference type="HOGENOM" id="CLU_067355_1_0_1"/>
<dbReference type="InParanoid" id="A0A3Q2UEI8"/>
<dbReference type="OrthoDB" id="6162659at2759"/>
<dbReference type="TreeFam" id="TF335955"/>
<dbReference type="Reactome" id="R-GGA-5685942">
    <property type="pathway name" value="HDR through Homologous Recombination (HRR)"/>
</dbReference>
<dbReference type="Reactome" id="R-GGA-5693568">
    <property type="pathway name" value="Resolution of D-loop Structures through Holliday Junction Intermediates"/>
</dbReference>
<dbReference type="Reactome" id="R-GGA-5693579">
    <property type="pathway name" value="Homologous DNA Pairing and Strand Exchange"/>
</dbReference>
<dbReference type="PRO" id="PR:A0A3Q2UEI8"/>
<dbReference type="Proteomes" id="UP000000539">
    <property type="component" value="Chromosome 1"/>
</dbReference>
<dbReference type="Bgee" id="ENSGALG00000017290">
    <property type="expression patterns" value="Expressed in colon and 12 other cell types or tissues"/>
</dbReference>
<dbReference type="GO" id="GO:0005694">
    <property type="term" value="C:chromosome"/>
    <property type="evidence" value="ECO:0000250"/>
    <property type="project" value="UniProtKB"/>
</dbReference>
<dbReference type="GO" id="GO:0005634">
    <property type="term" value="C:nucleus"/>
    <property type="evidence" value="ECO:0000250"/>
    <property type="project" value="UniProtKB"/>
</dbReference>
<dbReference type="GO" id="GO:0062037">
    <property type="term" value="F:D-loop DNA binding"/>
    <property type="evidence" value="ECO:0000250"/>
    <property type="project" value="UniProtKB"/>
</dbReference>
<dbReference type="GO" id="GO:0003677">
    <property type="term" value="F:DNA binding"/>
    <property type="evidence" value="ECO:0000250"/>
    <property type="project" value="UniProtKB"/>
</dbReference>
<dbReference type="GO" id="GO:0000217">
    <property type="term" value="F:DNA secondary structure binding"/>
    <property type="evidence" value="ECO:0000250"/>
    <property type="project" value="UniProtKB"/>
</dbReference>
<dbReference type="GO" id="GO:0003690">
    <property type="term" value="F:double-stranded DNA binding"/>
    <property type="evidence" value="ECO:0000250"/>
    <property type="project" value="UniProtKB"/>
</dbReference>
<dbReference type="GO" id="GO:0003697">
    <property type="term" value="F:single-stranded DNA binding"/>
    <property type="evidence" value="ECO:0000250"/>
    <property type="project" value="UniProtKB"/>
</dbReference>
<dbReference type="GO" id="GO:0006974">
    <property type="term" value="P:DNA damage response"/>
    <property type="evidence" value="ECO:0000250"/>
    <property type="project" value="UniProtKB"/>
</dbReference>
<dbReference type="GO" id="GO:0000724">
    <property type="term" value="P:double-strand break repair via homologous recombination"/>
    <property type="evidence" value="ECO:0000318"/>
    <property type="project" value="GO_Central"/>
</dbReference>
<dbReference type="GO" id="GO:0036297">
    <property type="term" value="P:interstrand cross-link repair"/>
    <property type="evidence" value="ECO:0000318"/>
    <property type="project" value="GO_Central"/>
</dbReference>
<dbReference type="GO" id="GO:0051321">
    <property type="term" value="P:meiotic cell cycle"/>
    <property type="evidence" value="ECO:0007669"/>
    <property type="project" value="UniProtKB-KW"/>
</dbReference>
<dbReference type="GO" id="GO:1905168">
    <property type="term" value="P:positive regulation of double-strand break repair via homologous recombination"/>
    <property type="evidence" value="ECO:0000250"/>
    <property type="project" value="UniProtKB"/>
</dbReference>
<dbReference type="GO" id="GO:0010845">
    <property type="term" value="P:positive regulation of reciprocal meiotic recombination"/>
    <property type="evidence" value="ECO:0000250"/>
    <property type="project" value="UniProtKB"/>
</dbReference>
<dbReference type="InterPro" id="IPR052003">
    <property type="entry name" value="HR_DNA-Binding_Protein"/>
</dbReference>
<dbReference type="PANTHER" id="PTHR15361:SF4">
    <property type="entry name" value="RAD51-ASSOCIATED PROTEIN 1"/>
    <property type="match status" value="1"/>
</dbReference>
<dbReference type="PANTHER" id="PTHR15361">
    <property type="entry name" value="RAD51/NUKS-INTERACTING PROTEIN"/>
    <property type="match status" value="1"/>
</dbReference>
<reference key="1">
    <citation type="journal article" date="2004" name="Nature">
        <title>Sequence and comparative analysis of the chicken genome provide unique perspectives on vertebrate evolution.</title>
        <authorList>
            <person name="Hillier L.W."/>
            <person name="Miller W."/>
            <person name="Birney E."/>
            <person name="Warren W."/>
            <person name="Hardison R.C."/>
            <person name="Ponting C.P."/>
            <person name="Bork P."/>
            <person name="Burt D.W."/>
            <person name="Groenen M.A.M."/>
            <person name="Delany M.E."/>
            <person name="Dodgson J.B."/>
            <person name="Chinwalla A.T."/>
            <person name="Cliften P.F."/>
            <person name="Clifton S.W."/>
            <person name="Delehaunty K.D."/>
            <person name="Fronick C."/>
            <person name="Fulton R.S."/>
            <person name="Graves T.A."/>
            <person name="Kremitzki C."/>
            <person name="Layman D."/>
            <person name="Magrini V."/>
            <person name="McPherson J.D."/>
            <person name="Miner T.L."/>
            <person name="Minx P."/>
            <person name="Nash W.E."/>
            <person name="Nhan M.N."/>
            <person name="Nelson J.O."/>
            <person name="Oddy L.G."/>
            <person name="Pohl C.S."/>
            <person name="Randall-Maher J."/>
            <person name="Smith S.M."/>
            <person name="Wallis J.W."/>
            <person name="Yang S.-P."/>
            <person name="Romanov M.N."/>
            <person name="Rondelli C.M."/>
            <person name="Paton B."/>
            <person name="Smith J."/>
            <person name="Morrice D."/>
            <person name="Daniels L."/>
            <person name="Tempest H.G."/>
            <person name="Robertson L."/>
            <person name="Masabanda J.S."/>
            <person name="Griffin D.K."/>
            <person name="Vignal A."/>
            <person name="Fillon V."/>
            <person name="Jacobbson L."/>
            <person name="Kerje S."/>
            <person name="Andersson L."/>
            <person name="Crooijmans R.P."/>
            <person name="Aerts J."/>
            <person name="van der Poel J.J."/>
            <person name="Ellegren H."/>
            <person name="Caldwell R.B."/>
            <person name="Hubbard S.J."/>
            <person name="Grafham D.V."/>
            <person name="Kierzek A.M."/>
            <person name="McLaren S.R."/>
            <person name="Overton I.M."/>
            <person name="Arakawa H."/>
            <person name="Beattie K.J."/>
            <person name="Bezzubov Y."/>
            <person name="Boardman P.E."/>
            <person name="Bonfield J.K."/>
            <person name="Croning M.D.R."/>
            <person name="Davies R.M."/>
            <person name="Francis M.D."/>
            <person name="Humphray S.J."/>
            <person name="Scott C.E."/>
            <person name="Taylor R.G."/>
            <person name="Tickle C."/>
            <person name="Brown W.R.A."/>
            <person name="Rogers J."/>
            <person name="Buerstedde J.-M."/>
            <person name="Wilson S.A."/>
            <person name="Stubbs L."/>
            <person name="Ovcharenko I."/>
            <person name="Gordon L."/>
            <person name="Lucas S."/>
            <person name="Miller M.M."/>
            <person name="Inoko H."/>
            <person name="Shiina T."/>
            <person name="Kaufman J."/>
            <person name="Salomonsen J."/>
            <person name="Skjoedt K."/>
            <person name="Wong G.K.-S."/>
            <person name="Wang J."/>
            <person name="Liu B."/>
            <person name="Wang J."/>
            <person name="Yu J."/>
            <person name="Yang H."/>
            <person name="Nefedov M."/>
            <person name="Koriabine M."/>
            <person name="Dejong P.J."/>
            <person name="Goodstadt L."/>
            <person name="Webber C."/>
            <person name="Dickens N.J."/>
            <person name="Letunic I."/>
            <person name="Suyama M."/>
            <person name="Torrents D."/>
            <person name="von Mering C."/>
            <person name="Zdobnov E.M."/>
            <person name="Makova K."/>
            <person name="Nekrutenko A."/>
            <person name="Elnitski L."/>
            <person name="Eswara P."/>
            <person name="King D.C."/>
            <person name="Yang S.-P."/>
            <person name="Tyekucheva S."/>
            <person name="Radakrishnan A."/>
            <person name="Harris R.S."/>
            <person name="Chiaromonte F."/>
            <person name="Taylor J."/>
            <person name="He J."/>
            <person name="Rijnkels M."/>
            <person name="Griffiths-Jones S."/>
            <person name="Ureta-Vidal A."/>
            <person name="Hoffman M.M."/>
            <person name="Severin J."/>
            <person name="Searle S.M.J."/>
            <person name="Law A.S."/>
            <person name="Speed D."/>
            <person name="Waddington D."/>
            <person name="Cheng Z."/>
            <person name="Tuzun E."/>
            <person name="Eichler E."/>
            <person name="Bao Z."/>
            <person name="Flicek P."/>
            <person name="Shteynberg D.D."/>
            <person name="Brent M.R."/>
            <person name="Bye J.M."/>
            <person name="Huckle E.J."/>
            <person name="Chatterji S."/>
            <person name="Dewey C."/>
            <person name="Pachter L."/>
            <person name="Kouranov A."/>
            <person name="Mourelatos Z."/>
            <person name="Hatzigeorgiou A.G."/>
            <person name="Paterson A.H."/>
            <person name="Ivarie R."/>
            <person name="Brandstrom M."/>
            <person name="Axelsson E."/>
            <person name="Backstrom N."/>
            <person name="Berlin S."/>
            <person name="Webster M.T."/>
            <person name="Pourquie O."/>
            <person name="Reymond A."/>
            <person name="Ucla C."/>
            <person name="Antonarakis S.E."/>
            <person name="Long M."/>
            <person name="Emerson J.J."/>
            <person name="Betran E."/>
            <person name="Dupanloup I."/>
            <person name="Kaessmann H."/>
            <person name="Hinrichs A.S."/>
            <person name="Bejerano G."/>
            <person name="Furey T.S."/>
            <person name="Harte R.A."/>
            <person name="Raney B."/>
            <person name="Siepel A."/>
            <person name="Kent W.J."/>
            <person name="Haussler D."/>
            <person name="Eyras E."/>
            <person name="Castelo R."/>
            <person name="Abril J.F."/>
            <person name="Castellano S."/>
            <person name="Camara F."/>
            <person name="Parra G."/>
            <person name="Guigo R."/>
            <person name="Bourque G."/>
            <person name="Tesler G."/>
            <person name="Pevzner P.A."/>
            <person name="Smit A."/>
            <person name="Fulton L.A."/>
            <person name="Mardis E.R."/>
            <person name="Wilson R.K."/>
        </authorList>
    </citation>
    <scope>NUCLEOTIDE SEQUENCE [LARGE SCALE GENOMIC DNA]</scope>
    <source>
        <strain>Red jungle fowl</strain>
    </source>
</reference>
<reference key="2">
    <citation type="journal article" date="2014" name="DNA Repair">
        <title>RAD51AP1-deficiency in vertebrate cells impairs DNA replication.</title>
        <authorList>
            <person name="Parplys A.C."/>
            <person name="Kratz K."/>
            <person name="Speed M.C."/>
            <person name="Leung S.G."/>
            <person name="Schild D."/>
            <person name="Wiese C."/>
        </authorList>
    </citation>
    <scope>FUNCTION</scope>
</reference>
<gene>
    <name evidence="5" type="primary">RAD51AP1</name>
</gene>
<evidence type="ECO:0000250" key="1">
    <source>
        <dbReference type="UniProtKB" id="Q8C551"/>
    </source>
</evidence>
<evidence type="ECO:0000250" key="2">
    <source>
        <dbReference type="UniProtKB" id="Q96B01"/>
    </source>
</evidence>
<evidence type="ECO:0000256" key="3">
    <source>
        <dbReference type="SAM" id="MobiDB-lite"/>
    </source>
</evidence>
<evidence type="ECO:0000269" key="4">
    <source>
    </source>
</evidence>
<evidence type="ECO:0000303" key="5">
    <source>
    </source>
</evidence>
<evidence type="ECO:0000305" key="6"/>
<feature type="chain" id="PRO_0000451602" description="RAD51-associated protein 1">
    <location>
        <begin position="1"/>
        <end position="253"/>
    </location>
</feature>
<feature type="region of interest" description="Interaction with DNA" evidence="2">
    <location>
        <begin position="32"/>
        <end position="51"/>
    </location>
</feature>
<feature type="region of interest" description="Disordered" evidence="3">
    <location>
        <begin position="33"/>
        <end position="74"/>
    </location>
</feature>
<feature type="region of interest" description="Disordered" evidence="3">
    <location>
        <begin position="141"/>
        <end position="169"/>
    </location>
</feature>
<feature type="region of interest" description="Disordered" evidence="3">
    <location>
        <begin position="184"/>
        <end position="244"/>
    </location>
</feature>
<feature type="region of interest" description="Interaction with DNA" evidence="2">
    <location>
        <begin position="190"/>
        <end position="241"/>
    </location>
</feature>
<feature type="compositionally biased region" description="Acidic residues" evidence="3">
    <location>
        <begin position="154"/>
        <end position="169"/>
    </location>
</feature>
<feature type="compositionally biased region" description="Basic residues" evidence="3">
    <location>
        <begin position="184"/>
        <end position="195"/>
    </location>
</feature>
<feature type="compositionally biased region" description="Polar residues" evidence="3">
    <location>
        <begin position="199"/>
        <end position="222"/>
    </location>
</feature>
<name>R51A1_CHICK</name>
<sequence length="253" mass="28817">MARMVRRNRKIVNYSEFGDFEDGDEDFACIAAPLTKKSRTQPKEPKKENKKKQKTQKEFTSSQKQSPIGRTSLDDSFCERDLNVTLALSIKEKSANILEVQNSKEQGQVLDDDIPRNGCRQWTAASKAFSHQKLLTIDSCDREHVTDSEPVTIPDEESEEDSDYREGNDEDCAMEKMKINGMKKKIKRQTRKEKKTPKSENNTTVMELKSEQTQKMMSTSSEPVGRPLYTSSPVTNKKPKWVPPGRACAVSFL</sequence>
<accession>A0A3Q2UEI8</accession>
<accession>E1C6H8</accession>
<comment type="function">
    <text evidence="2 4">Structure-specific DNA-binding protein involved in DNA repair by promoting RAD51-mediated homologous recombination (By similarity). Acts by stimulating D-Loop formation by RAD51: specifically enhances joint molecule formation through its structure-specific DNA interaction and its interaction with RAD51 (By similarity). Binds single-stranded DNA (ssDNA), double-stranded DNA (dsDNA) and secondary DNA structures, such as D-loop structures: has a strong preference for branched-DNA structures that are obligatory intermediates during joint molecule formation (By similarity). Involved in mitotic recombination-dependent replication fork processing (PubMed:25288561). Also involved in meiosis by promoting DMC1-mediated homologous meiotic recombination (By similarity).</text>
</comment>
<comment type="subunit">
    <text evidence="2">Monomer.</text>
</comment>
<comment type="subcellular location">
    <subcellularLocation>
        <location evidence="2">Chromosome</location>
    </subcellularLocation>
    <subcellularLocation>
        <location evidence="2">Nucleus</location>
    </subcellularLocation>
    <text evidence="1">Colocalizes with RAD51 to multiple nuclear foci. Colocalizes with DMC1 on meiotic chromatin.</text>
</comment>
<proteinExistence type="inferred from homology"/>
<keyword id="KW-0158">Chromosome</keyword>
<keyword id="KW-0227">DNA damage</keyword>
<keyword id="KW-0233">DNA recombination</keyword>
<keyword id="KW-0234">DNA repair</keyword>
<keyword id="KW-0238">DNA-binding</keyword>
<keyword id="KW-0469">Meiosis</keyword>
<keyword id="KW-0539">Nucleus</keyword>
<keyword id="KW-1185">Reference proteome</keyword>
<organism>
    <name type="scientific">Gallus gallus</name>
    <name type="common">Chicken</name>
    <dbReference type="NCBI Taxonomy" id="9031"/>
    <lineage>
        <taxon>Eukaryota</taxon>
        <taxon>Metazoa</taxon>
        <taxon>Chordata</taxon>
        <taxon>Craniata</taxon>
        <taxon>Vertebrata</taxon>
        <taxon>Euteleostomi</taxon>
        <taxon>Archelosauria</taxon>
        <taxon>Archosauria</taxon>
        <taxon>Dinosauria</taxon>
        <taxon>Saurischia</taxon>
        <taxon>Theropoda</taxon>
        <taxon>Coelurosauria</taxon>
        <taxon>Aves</taxon>
        <taxon>Neognathae</taxon>
        <taxon>Galloanserae</taxon>
        <taxon>Galliformes</taxon>
        <taxon>Phasianidae</taxon>
        <taxon>Phasianinae</taxon>
        <taxon>Gallus</taxon>
    </lineage>
</organism>